<organism>
    <name type="scientific">Mycolicibacterium smegmatis</name>
    <name type="common">Mycobacterium smegmatis</name>
    <dbReference type="NCBI Taxonomy" id="1772"/>
    <lineage>
        <taxon>Bacteria</taxon>
        <taxon>Bacillati</taxon>
        <taxon>Actinomycetota</taxon>
        <taxon>Actinomycetes</taxon>
        <taxon>Mycobacteriales</taxon>
        <taxon>Mycobacteriaceae</taxon>
        <taxon>Mycolicibacterium</taxon>
    </lineage>
</organism>
<sequence>MRFIVGRRGGQTGADAADETFTTLAGLLKRGNSYAHAASALILVCADEGEDERTARYAAVDAGAAIAQLTIEAVSRGLIAHPMAGFDVERPAAFGVPDGVRPFAVVALGHLGDYATADEAIAERDSRPRERLALEQVAFTGRWGNPL</sequence>
<protein>
    <recommendedName>
        <fullName>Uncharacterized 15.4 kDa protein in ask 5'region</fullName>
    </recommendedName>
    <alternativeName>
        <fullName>ORFX</fullName>
    </alternativeName>
</protein>
<dbReference type="EMBL" id="Z17372">
    <property type="protein sequence ID" value="CAA78983.1"/>
    <property type="molecule type" value="Genomic_DNA"/>
</dbReference>
<dbReference type="PIR" id="S42421">
    <property type="entry name" value="S42421"/>
</dbReference>
<dbReference type="SMR" id="P41401"/>
<dbReference type="GO" id="GO:0016491">
    <property type="term" value="F:oxidoreductase activity"/>
    <property type="evidence" value="ECO:0007669"/>
    <property type="project" value="InterPro"/>
</dbReference>
<dbReference type="Gene3D" id="3.40.109.10">
    <property type="entry name" value="NADH Oxidase"/>
    <property type="match status" value="1"/>
</dbReference>
<dbReference type="InterPro" id="IPR029479">
    <property type="entry name" value="Nitroreductase"/>
</dbReference>
<dbReference type="InterPro" id="IPR000415">
    <property type="entry name" value="Nitroreductase-like"/>
</dbReference>
<dbReference type="Pfam" id="PF00881">
    <property type="entry name" value="Nitroreductase"/>
    <property type="match status" value="1"/>
</dbReference>
<dbReference type="SUPFAM" id="SSF55469">
    <property type="entry name" value="FMN-dependent nitroreductase-like"/>
    <property type="match status" value="1"/>
</dbReference>
<reference key="1">
    <citation type="journal article" date="1994" name="Mol. Microbiol.">
        <title>Isolation and characterization of the aspartokinase and aspartate semialdehyde dehydrogenase operon from mycobacteria.</title>
        <authorList>
            <person name="Cirillo J.D."/>
            <person name="Weisbrod T.R."/>
            <person name="Pascopella L."/>
            <person name="Bloom B.R."/>
            <person name="Jacobs W.R. Jr."/>
        </authorList>
    </citation>
    <scope>NUCLEOTIDE SEQUENCE [GENOMIC DNA]</scope>
    <source>
        <strain>ATCC 607 / DSM 43465 / JCM 20379 / NBRC 3207 / NRRL B-692</strain>
    </source>
</reference>
<accession>P41401</accession>
<name>YASK_MYCSM</name>
<feature type="chain" id="PRO_0000066127" description="Uncharacterized 15.4 kDa protein in ask 5'region">
    <location>
        <begin position="1"/>
        <end position="147"/>
    </location>
</feature>
<proteinExistence type="predicted"/>